<reference key="1">
    <citation type="journal article" date="2005" name="PLoS Biol.">
        <title>The genome sequence of Rickettsia felis identifies the first putative conjugative plasmid in an obligate intracellular parasite.</title>
        <authorList>
            <person name="Ogata H."/>
            <person name="Renesto P."/>
            <person name="Audic S."/>
            <person name="Robert C."/>
            <person name="Blanc G."/>
            <person name="Fournier P.-E."/>
            <person name="Parinello H."/>
            <person name="Claverie J.-M."/>
            <person name="Raoult D."/>
        </authorList>
    </citation>
    <scope>NUCLEOTIDE SEQUENCE [LARGE SCALE GENOMIC DNA]</scope>
    <source>
        <strain>ATCC VR-1525 / URRWXCal2</strain>
    </source>
</reference>
<accession>Q4UL77</accession>
<evidence type="ECO:0000255" key="1">
    <source>
        <dbReference type="HAMAP-Rule" id="MF_00331"/>
    </source>
</evidence>
<evidence type="ECO:0000305" key="2"/>
<proteinExistence type="inferred from homology"/>
<name>ISCS_RICFE</name>
<feature type="chain" id="PRO_0000277974" description="Cysteine desulfurase IscS">
    <location>
        <begin position="1"/>
        <end position="410"/>
    </location>
</feature>
<feature type="active site" description="Cysteine persulfide intermediate" evidence="1">
    <location>
        <position position="334"/>
    </location>
</feature>
<feature type="binding site" evidence="1">
    <location>
        <begin position="80"/>
        <end position="81"/>
    </location>
    <ligand>
        <name>pyridoxal 5'-phosphate</name>
        <dbReference type="ChEBI" id="CHEBI:597326"/>
    </ligand>
</feature>
<feature type="binding site" evidence="1">
    <location>
        <position position="160"/>
    </location>
    <ligand>
        <name>pyridoxal 5'-phosphate</name>
        <dbReference type="ChEBI" id="CHEBI:597326"/>
    </ligand>
</feature>
<feature type="binding site" evidence="1">
    <location>
        <position position="188"/>
    </location>
    <ligand>
        <name>pyridoxal 5'-phosphate</name>
        <dbReference type="ChEBI" id="CHEBI:597326"/>
    </ligand>
</feature>
<feature type="binding site" evidence="1">
    <location>
        <begin position="208"/>
        <end position="210"/>
    </location>
    <ligand>
        <name>pyridoxal 5'-phosphate</name>
        <dbReference type="ChEBI" id="CHEBI:597326"/>
    </ligand>
</feature>
<feature type="binding site" evidence="1">
    <location>
        <position position="248"/>
    </location>
    <ligand>
        <name>pyridoxal 5'-phosphate</name>
        <dbReference type="ChEBI" id="CHEBI:597326"/>
    </ligand>
</feature>
<feature type="binding site" description="via persulfide group" evidence="1">
    <location>
        <position position="334"/>
    </location>
    <ligand>
        <name>[2Fe-2S] cluster</name>
        <dbReference type="ChEBI" id="CHEBI:190135"/>
        <note>ligand shared with IscU</note>
    </ligand>
</feature>
<feature type="modified residue" description="N6-(pyridoxal phosphate)lysine" evidence="1">
    <location>
        <position position="211"/>
    </location>
</feature>
<keyword id="KW-0001">2Fe-2S</keyword>
<keyword id="KW-0963">Cytoplasm</keyword>
<keyword id="KW-0408">Iron</keyword>
<keyword id="KW-0411">Iron-sulfur</keyword>
<keyword id="KW-0479">Metal-binding</keyword>
<keyword id="KW-0663">Pyridoxal phosphate</keyword>
<keyword id="KW-0808">Transferase</keyword>
<dbReference type="EC" id="2.8.1.7" evidence="1"/>
<dbReference type="EMBL" id="CP000053">
    <property type="protein sequence ID" value="AAY61696.1"/>
    <property type="status" value="ALT_INIT"/>
    <property type="molecule type" value="Genomic_DNA"/>
</dbReference>
<dbReference type="SMR" id="Q4UL77"/>
<dbReference type="STRING" id="315456.RF_0845"/>
<dbReference type="KEGG" id="rfe:RF_0845"/>
<dbReference type="eggNOG" id="COG1104">
    <property type="taxonomic scope" value="Bacteria"/>
</dbReference>
<dbReference type="HOGENOM" id="CLU_003433_0_2_5"/>
<dbReference type="OrthoDB" id="9808002at2"/>
<dbReference type="UniPathway" id="UPA00266"/>
<dbReference type="Proteomes" id="UP000008548">
    <property type="component" value="Chromosome"/>
</dbReference>
<dbReference type="GO" id="GO:1990221">
    <property type="term" value="C:L-cysteine desulfurase complex"/>
    <property type="evidence" value="ECO:0007669"/>
    <property type="project" value="UniProtKB-ARBA"/>
</dbReference>
<dbReference type="GO" id="GO:0051537">
    <property type="term" value="F:2 iron, 2 sulfur cluster binding"/>
    <property type="evidence" value="ECO:0007669"/>
    <property type="project" value="UniProtKB-UniRule"/>
</dbReference>
<dbReference type="GO" id="GO:0031071">
    <property type="term" value="F:cysteine desulfurase activity"/>
    <property type="evidence" value="ECO:0007669"/>
    <property type="project" value="UniProtKB-UniRule"/>
</dbReference>
<dbReference type="GO" id="GO:0046872">
    <property type="term" value="F:metal ion binding"/>
    <property type="evidence" value="ECO:0007669"/>
    <property type="project" value="UniProtKB-KW"/>
</dbReference>
<dbReference type="GO" id="GO:0030170">
    <property type="term" value="F:pyridoxal phosphate binding"/>
    <property type="evidence" value="ECO:0007669"/>
    <property type="project" value="UniProtKB-UniRule"/>
</dbReference>
<dbReference type="GO" id="GO:0044571">
    <property type="term" value="P:[2Fe-2S] cluster assembly"/>
    <property type="evidence" value="ECO:0007669"/>
    <property type="project" value="UniProtKB-UniRule"/>
</dbReference>
<dbReference type="FunFam" id="3.40.640.10:FF:000003">
    <property type="entry name" value="Cysteine desulfurase IscS"/>
    <property type="match status" value="1"/>
</dbReference>
<dbReference type="FunFam" id="3.90.1150.10:FF:000002">
    <property type="entry name" value="Cysteine desulfurase IscS"/>
    <property type="match status" value="1"/>
</dbReference>
<dbReference type="Gene3D" id="3.90.1150.10">
    <property type="entry name" value="Aspartate Aminotransferase, domain 1"/>
    <property type="match status" value="1"/>
</dbReference>
<dbReference type="Gene3D" id="3.40.640.10">
    <property type="entry name" value="Type I PLP-dependent aspartate aminotransferase-like (Major domain)"/>
    <property type="match status" value="1"/>
</dbReference>
<dbReference type="HAMAP" id="MF_00331">
    <property type="entry name" value="Cys_desulf_IscS"/>
    <property type="match status" value="1"/>
</dbReference>
<dbReference type="InterPro" id="IPR000192">
    <property type="entry name" value="Aminotrans_V_dom"/>
</dbReference>
<dbReference type="InterPro" id="IPR020578">
    <property type="entry name" value="Aminotrans_V_PyrdxlP_BS"/>
</dbReference>
<dbReference type="InterPro" id="IPR010240">
    <property type="entry name" value="Cys_deSase_IscS"/>
</dbReference>
<dbReference type="InterPro" id="IPR016454">
    <property type="entry name" value="Cysteine_dSase"/>
</dbReference>
<dbReference type="InterPro" id="IPR015424">
    <property type="entry name" value="PyrdxlP-dep_Trfase"/>
</dbReference>
<dbReference type="InterPro" id="IPR015421">
    <property type="entry name" value="PyrdxlP-dep_Trfase_major"/>
</dbReference>
<dbReference type="InterPro" id="IPR015422">
    <property type="entry name" value="PyrdxlP-dep_Trfase_small"/>
</dbReference>
<dbReference type="NCBIfam" id="TIGR02006">
    <property type="entry name" value="IscS"/>
    <property type="match status" value="1"/>
</dbReference>
<dbReference type="NCBIfam" id="NF002806">
    <property type="entry name" value="PRK02948.1"/>
    <property type="match status" value="1"/>
</dbReference>
<dbReference type="NCBIfam" id="NF010611">
    <property type="entry name" value="PRK14012.1"/>
    <property type="match status" value="1"/>
</dbReference>
<dbReference type="PANTHER" id="PTHR11601:SF34">
    <property type="entry name" value="CYSTEINE DESULFURASE"/>
    <property type="match status" value="1"/>
</dbReference>
<dbReference type="PANTHER" id="PTHR11601">
    <property type="entry name" value="CYSTEINE DESULFURYLASE FAMILY MEMBER"/>
    <property type="match status" value="1"/>
</dbReference>
<dbReference type="Pfam" id="PF00266">
    <property type="entry name" value="Aminotran_5"/>
    <property type="match status" value="1"/>
</dbReference>
<dbReference type="PIRSF" id="PIRSF005572">
    <property type="entry name" value="NifS"/>
    <property type="match status" value="1"/>
</dbReference>
<dbReference type="SUPFAM" id="SSF53383">
    <property type="entry name" value="PLP-dependent transferases"/>
    <property type="match status" value="1"/>
</dbReference>
<dbReference type="PROSITE" id="PS00595">
    <property type="entry name" value="AA_TRANSFER_CLASS_5"/>
    <property type="match status" value="1"/>
</dbReference>
<comment type="function">
    <text evidence="1">Master enzyme that delivers sulfur to a number of partners involved in Fe-S cluster assembly, tRNA modification or cofactor biosynthesis. Catalyzes the removal of elemental sulfur atoms from cysteine to produce alanine. Functions as a sulfur delivery protein for Fe-S cluster synthesis onto IscU, an Fe-S scaffold assembly protein, as well as other S acceptor proteins.</text>
</comment>
<comment type="catalytic activity">
    <reaction evidence="1">
        <text>(sulfur carrier)-H + L-cysteine = (sulfur carrier)-SH + L-alanine</text>
        <dbReference type="Rhea" id="RHEA:43892"/>
        <dbReference type="Rhea" id="RHEA-COMP:14737"/>
        <dbReference type="Rhea" id="RHEA-COMP:14739"/>
        <dbReference type="ChEBI" id="CHEBI:29917"/>
        <dbReference type="ChEBI" id="CHEBI:35235"/>
        <dbReference type="ChEBI" id="CHEBI:57972"/>
        <dbReference type="ChEBI" id="CHEBI:64428"/>
        <dbReference type="EC" id="2.8.1.7"/>
    </reaction>
</comment>
<comment type="cofactor">
    <cofactor evidence="1">
        <name>pyridoxal 5'-phosphate</name>
        <dbReference type="ChEBI" id="CHEBI:597326"/>
    </cofactor>
</comment>
<comment type="pathway">
    <text evidence="1">Cofactor biosynthesis; iron-sulfur cluster biosynthesis.</text>
</comment>
<comment type="subunit">
    <text evidence="1">Homodimer. Forms a heterotetramer with IscU, interacts with other sulfur acceptors.</text>
</comment>
<comment type="subcellular location">
    <subcellularLocation>
        <location evidence="1">Cytoplasm</location>
    </subcellularLocation>
</comment>
<comment type="similarity">
    <text evidence="1">Belongs to the class-V pyridoxal-phosphate-dependent aminotransferase family. NifS/IscS subfamily.</text>
</comment>
<comment type="sequence caution" evidence="2">
    <conflict type="erroneous initiation">
        <sequence resource="EMBL-CDS" id="AAY61696"/>
    </conflict>
    <text>Extended N-terminus.</text>
</comment>
<organism>
    <name type="scientific">Rickettsia felis (strain ATCC VR-1525 / URRWXCal2)</name>
    <name type="common">Rickettsia azadi</name>
    <dbReference type="NCBI Taxonomy" id="315456"/>
    <lineage>
        <taxon>Bacteria</taxon>
        <taxon>Pseudomonadati</taxon>
        <taxon>Pseudomonadota</taxon>
        <taxon>Alphaproteobacteria</taxon>
        <taxon>Rickettsiales</taxon>
        <taxon>Rickettsiaceae</taxon>
        <taxon>Rickettsieae</taxon>
        <taxon>Rickettsia</taxon>
        <taxon>spotted fever group</taxon>
    </lineage>
</organism>
<sequence>MNPQLNNPNLPIYMDYQATTPLDPRVMEAMLPYFTTKFGNPHSRSHSFGWEAENAVEEARSRVARLIGADTKEIIFTSGATESNNLAIKGIAKFYGNKKNHIITVVSEHKCVLDACRHLEQEGIKITYLPIKPNGIIDLETLKNAITDQTMLVSVMAVNNEIGVVQPLKEIGKICRERGVFFHSDIAQGFGKIPIDVNEFNIDLASISGHKIYGPKGIGALYVRKKPRVRVTPLINGGGQERGMRSGTLPTPLIVGLGMAAEIAYSVMEKDTKHVNYLFDRFLNNIHNRISEVYLNGDKNQRYKGNINLSFAGVEGESIILAIKDLAVSSGSACTSASLEPSYVLRSMGIGEELAHTSIRFGIGRFTTEQEVDYAVDLICSKIDKLRELSPLWEMVQEGIDLKKIKWATH</sequence>
<gene>
    <name evidence="1" type="primary">iscS</name>
    <name type="ordered locus">RF_0845</name>
</gene>
<protein>
    <recommendedName>
        <fullName evidence="1">Cysteine desulfurase IscS</fullName>
        <ecNumber evidence="1">2.8.1.7</ecNumber>
    </recommendedName>
</protein>